<gene>
    <name type="primary">SRK2</name>
</gene>
<sequence>TFLVRESESKPGDYSLSIQDGDNVKHYRIRKLDEGGFFITRRAVFNTLKDLVQYYQNESDGLCVNLRQPCRPLERPQIDLSHKTKDMWEISRDSITLIRKLGAGQFGEVYQGLWNNSTPVAVKTLKAGTMQPAAFLAEAQIMKKLRHPKLIQLYAVCTQGEPVYIITELMSKGSLLDYLQGEAGALKLPQLIDMAAQVAAGMAYLELHNYIHRDLAARNILVGDNNICKVADFGLARLIVSDDYNATEGAKFPIKWTAPEAALFNRFSIKSDVWSFGILITELVTYGRIPYPGMSNAEVLQNLDKGYRMPCPVTTPESLYQIMLDCWKRNPADRPTFEALQWRLEDFFVLDAGQYQHAADVL</sequence>
<organism>
    <name type="scientific">Spongilla lacustris</name>
    <name type="common">Freshwater sponge</name>
    <dbReference type="NCBI Taxonomy" id="6055"/>
    <lineage>
        <taxon>Eukaryota</taxon>
        <taxon>Metazoa</taxon>
        <taxon>Porifera</taxon>
        <taxon>Demospongiae</taxon>
        <taxon>Heteroscleromorpha</taxon>
        <taxon>Spongillida</taxon>
        <taxon>Spongillidae</taxon>
        <taxon>Spongilla</taxon>
    </lineage>
</organism>
<protein>
    <recommendedName>
        <fullName>Tyrosine-protein kinase SRK2</fullName>
        <ecNumber>2.7.10.2</ecNumber>
    </recommendedName>
</protein>
<evidence type="ECO:0000255" key="1">
    <source>
        <dbReference type="PROSITE-ProRule" id="PRU00159"/>
    </source>
</evidence>
<evidence type="ECO:0000255" key="2">
    <source>
        <dbReference type="PROSITE-ProRule" id="PRU00191"/>
    </source>
</evidence>
<evidence type="ECO:0000255" key="3">
    <source>
        <dbReference type="PROSITE-ProRule" id="PRU10028"/>
    </source>
</evidence>
<evidence type="ECO:0000305" key="4"/>
<reference key="1">
    <citation type="journal article" date="1992" name="Oncogene">
        <title>Multiple src-related kinase genes, srk1-4, in the fresh water sponge Spongilla lacustris.</title>
        <authorList>
            <person name="Ottilie S."/>
            <person name="Raulf F."/>
            <person name="Barnekow A."/>
            <person name="Hannig G."/>
            <person name="Schartl M."/>
        </authorList>
    </citation>
    <scope>NUCLEOTIDE SEQUENCE [MRNA]</scope>
</reference>
<feature type="chain" id="PRO_0000088158" description="Tyrosine-protein kinase SRK2">
    <location>
        <begin position="1" status="less than"/>
        <end position="362"/>
    </location>
</feature>
<feature type="domain" description="SH2" evidence="2">
    <location>
        <begin position="1" status="less than"/>
        <end position="70"/>
    </location>
</feature>
<feature type="domain" description="Protein kinase" evidence="1">
    <location>
        <begin position="95"/>
        <end position="348"/>
    </location>
</feature>
<feature type="active site" description="Proton acceptor" evidence="1 3">
    <location>
        <position position="214"/>
    </location>
</feature>
<feature type="binding site" evidence="1">
    <location>
        <begin position="101"/>
        <end position="109"/>
    </location>
    <ligand>
        <name>ATP</name>
        <dbReference type="ChEBI" id="CHEBI:30616"/>
    </ligand>
</feature>
<feature type="binding site" evidence="1">
    <location>
        <position position="123"/>
    </location>
    <ligand>
        <name>ATP</name>
        <dbReference type="ChEBI" id="CHEBI:30616"/>
    </ligand>
</feature>
<feature type="non-terminal residue">
    <location>
        <position position="1"/>
    </location>
</feature>
<proteinExistence type="evidence at transcript level"/>
<keyword id="KW-0067">ATP-binding</keyword>
<keyword id="KW-0963">Cytoplasm</keyword>
<keyword id="KW-0418">Kinase</keyword>
<keyword id="KW-0547">Nucleotide-binding</keyword>
<keyword id="KW-0597">Phosphoprotein</keyword>
<keyword id="KW-0727">SH2 domain</keyword>
<keyword id="KW-0808">Transferase</keyword>
<keyword id="KW-0829">Tyrosine-protein kinase</keyword>
<name>SRK2_SPOLA</name>
<accession>P42688</accession>
<dbReference type="EC" id="2.7.10.2"/>
<dbReference type="EMBL" id="X61602">
    <property type="protein sequence ID" value="CAA43799.1"/>
    <property type="molecule type" value="mRNA"/>
</dbReference>
<dbReference type="PIR" id="S24551">
    <property type="entry name" value="S24551"/>
</dbReference>
<dbReference type="SMR" id="P42688"/>
<dbReference type="GO" id="GO:0005737">
    <property type="term" value="C:cytoplasm"/>
    <property type="evidence" value="ECO:0007669"/>
    <property type="project" value="UniProtKB-SubCell"/>
</dbReference>
<dbReference type="GO" id="GO:0005524">
    <property type="term" value="F:ATP binding"/>
    <property type="evidence" value="ECO:0007669"/>
    <property type="project" value="UniProtKB-KW"/>
</dbReference>
<dbReference type="GO" id="GO:0004715">
    <property type="term" value="F:non-membrane spanning protein tyrosine kinase activity"/>
    <property type="evidence" value="ECO:0007669"/>
    <property type="project" value="UniProtKB-EC"/>
</dbReference>
<dbReference type="CDD" id="cd05068">
    <property type="entry name" value="PTKc_Frk_like"/>
    <property type="match status" value="1"/>
</dbReference>
<dbReference type="FunFam" id="1.10.510.10:FF:000318">
    <property type="entry name" value="Tyrosine-protein kinase"/>
    <property type="match status" value="1"/>
</dbReference>
<dbReference type="FunFam" id="3.30.200.20:FF:000037">
    <property type="entry name" value="Tyrosine-protein kinase"/>
    <property type="match status" value="1"/>
</dbReference>
<dbReference type="Gene3D" id="3.30.200.20">
    <property type="entry name" value="Phosphorylase Kinase, domain 1"/>
    <property type="match status" value="1"/>
</dbReference>
<dbReference type="Gene3D" id="3.30.505.10">
    <property type="entry name" value="SH2 domain"/>
    <property type="match status" value="1"/>
</dbReference>
<dbReference type="Gene3D" id="1.10.510.10">
    <property type="entry name" value="Transferase(Phosphotransferase) domain 1"/>
    <property type="match status" value="1"/>
</dbReference>
<dbReference type="InterPro" id="IPR011009">
    <property type="entry name" value="Kinase-like_dom_sf"/>
</dbReference>
<dbReference type="InterPro" id="IPR050198">
    <property type="entry name" value="Non-receptor_tyrosine_kinases"/>
</dbReference>
<dbReference type="InterPro" id="IPR000719">
    <property type="entry name" value="Prot_kinase_dom"/>
</dbReference>
<dbReference type="InterPro" id="IPR017441">
    <property type="entry name" value="Protein_kinase_ATP_BS"/>
</dbReference>
<dbReference type="InterPro" id="IPR001245">
    <property type="entry name" value="Ser-Thr/Tyr_kinase_cat_dom"/>
</dbReference>
<dbReference type="InterPro" id="IPR000980">
    <property type="entry name" value="SH2"/>
</dbReference>
<dbReference type="InterPro" id="IPR036860">
    <property type="entry name" value="SH2_dom_sf"/>
</dbReference>
<dbReference type="InterPro" id="IPR008266">
    <property type="entry name" value="Tyr_kinase_AS"/>
</dbReference>
<dbReference type="InterPro" id="IPR020635">
    <property type="entry name" value="Tyr_kinase_cat_dom"/>
</dbReference>
<dbReference type="PANTHER" id="PTHR24418">
    <property type="entry name" value="TYROSINE-PROTEIN KINASE"/>
    <property type="match status" value="1"/>
</dbReference>
<dbReference type="Pfam" id="PF07714">
    <property type="entry name" value="PK_Tyr_Ser-Thr"/>
    <property type="match status" value="1"/>
</dbReference>
<dbReference type="Pfam" id="PF00017">
    <property type="entry name" value="SH2"/>
    <property type="match status" value="1"/>
</dbReference>
<dbReference type="PRINTS" id="PR00401">
    <property type="entry name" value="SH2DOMAIN"/>
</dbReference>
<dbReference type="PRINTS" id="PR00109">
    <property type="entry name" value="TYRKINASE"/>
</dbReference>
<dbReference type="SMART" id="SM00252">
    <property type="entry name" value="SH2"/>
    <property type="match status" value="1"/>
</dbReference>
<dbReference type="SMART" id="SM00219">
    <property type="entry name" value="TyrKc"/>
    <property type="match status" value="1"/>
</dbReference>
<dbReference type="SUPFAM" id="SSF56112">
    <property type="entry name" value="Protein kinase-like (PK-like)"/>
    <property type="match status" value="1"/>
</dbReference>
<dbReference type="SUPFAM" id="SSF55550">
    <property type="entry name" value="SH2 domain"/>
    <property type="match status" value="1"/>
</dbReference>
<dbReference type="PROSITE" id="PS00107">
    <property type="entry name" value="PROTEIN_KINASE_ATP"/>
    <property type="match status" value="1"/>
</dbReference>
<dbReference type="PROSITE" id="PS50011">
    <property type="entry name" value="PROTEIN_KINASE_DOM"/>
    <property type="match status" value="1"/>
</dbReference>
<dbReference type="PROSITE" id="PS00109">
    <property type="entry name" value="PROTEIN_KINASE_TYR"/>
    <property type="match status" value="1"/>
</dbReference>
<dbReference type="PROSITE" id="PS50001">
    <property type="entry name" value="SH2"/>
    <property type="match status" value="1"/>
</dbReference>
<comment type="catalytic activity">
    <reaction evidence="3">
        <text>L-tyrosyl-[protein] + ATP = O-phospho-L-tyrosyl-[protein] + ADP + H(+)</text>
        <dbReference type="Rhea" id="RHEA:10596"/>
        <dbReference type="Rhea" id="RHEA-COMP:10136"/>
        <dbReference type="Rhea" id="RHEA-COMP:20101"/>
        <dbReference type="ChEBI" id="CHEBI:15378"/>
        <dbReference type="ChEBI" id="CHEBI:30616"/>
        <dbReference type="ChEBI" id="CHEBI:46858"/>
        <dbReference type="ChEBI" id="CHEBI:61978"/>
        <dbReference type="ChEBI" id="CHEBI:456216"/>
        <dbReference type="EC" id="2.7.10.2"/>
    </reaction>
</comment>
<comment type="subcellular location">
    <subcellularLocation>
        <location evidence="4">Cytoplasm</location>
    </subcellularLocation>
</comment>
<comment type="similarity">
    <text evidence="1">Belongs to the protein kinase superfamily. Tyr protein kinase family.</text>
</comment>